<name>TRPD_METM6</name>
<accession>A9AAU1</accession>
<reference key="1">
    <citation type="submission" date="2007-10" db="EMBL/GenBank/DDBJ databases">
        <title>Complete sequence of Methanococcus maripaludis C6.</title>
        <authorList>
            <consortium name="US DOE Joint Genome Institute"/>
            <person name="Copeland A."/>
            <person name="Lucas S."/>
            <person name="Lapidus A."/>
            <person name="Barry K."/>
            <person name="Glavina del Rio T."/>
            <person name="Dalin E."/>
            <person name="Tice H."/>
            <person name="Pitluck S."/>
            <person name="Clum A."/>
            <person name="Schmutz J."/>
            <person name="Larimer F."/>
            <person name="Land M."/>
            <person name="Hauser L."/>
            <person name="Kyrpides N."/>
            <person name="Mikhailova N."/>
            <person name="Sieprawska-Lupa M."/>
            <person name="Whitman W.B."/>
            <person name="Richardson P."/>
        </authorList>
    </citation>
    <scope>NUCLEOTIDE SEQUENCE [LARGE SCALE GENOMIC DNA]</scope>
    <source>
        <strain>C6 / ATCC BAA-1332</strain>
    </source>
</reference>
<comment type="function">
    <text evidence="1">Catalyzes the transfer of the phosphoribosyl group of 5-phosphorylribose-1-pyrophosphate (PRPP) to anthranilate to yield N-(5'-phosphoribosyl)-anthranilate (PRA).</text>
</comment>
<comment type="catalytic activity">
    <reaction evidence="1">
        <text>N-(5-phospho-beta-D-ribosyl)anthranilate + diphosphate = 5-phospho-alpha-D-ribose 1-diphosphate + anthranilate</text>
        <dbReference type="Rhea" id="RHEA:11768"/>
        <dbReference type="ChEBI" id="CHEBI:16567"/>
        <dbReference type="ChEBI" id="CHEBI:18277"/>
        <dbReference type="ChEBI" id="CHEBI:33019"/>
        <dbReference type="ChEBI" id="CHEBI:58017"/>
        <dbReference type="EC" id="2.4.2.18"/>
    </reaction>
</comment>
<comment type="cofactor">
    <cofactor evidence="1">
        <name>Mg(2+)</name>
        <dbReference type="ChEBI" id="CHEBI:18420"/>
    </cofactor>
    <text evidence="1">Binds 2 magnesium ions per monomer.</text>
</comment>
<comment type="pathway">
    <text evidence="1">Amino-acid biosynthesis; L-tryptophan biosynthesis; L-tryptophan from chorismate: step 2/5.</text>
</comment>
<comment type="subunit">
    <text evidence="1">Homodimer.</text>
</comment>
<comment type="similarity">
    <text evidence="1">Belongs to the anthranilate phosphoribosyltransferase family.</text>
</comment>
<sequence>MLNKIIERENLSFEESYELFNMLLNESEMRIAAYLVALQTKGVTADEIAGFAKAMRDNAVKIDLGEVTDTCGTGGDGSKTINVSTAVSIILSCFTKVAKHGNVSITSKSGSANVYEALGCKIPETPDDAKKSMEKTNFAFLFAPKYHPTLKKIMPVRNELKVKTIFNILGPLANPANPKYQILGVNSAELSENVAIALSKVGGIKKALVVYGNGLDELTPNGTSKITEYDGKFDTYEVTPKDFGLDYSKIRPCESPDESAKRLIDVFSGKINDDRNFILMNAAGALYTSEIASDFLDGVEIAKEAIESGKVLKKLEEIRNV</sequence>
<evidence type="ECO:0000255" key="1">
    <source>
        <dbReference type="HAMAP-Rule" id="MF_00211"/>
    </source>
</evidence>
<keyword id="KW-0028">Amino-acid biosynthesis</keyword>
<keyword id="KW-0057">Aromatic amino acid biosynthesis</keyword>
<keyword id="KW-0328">Glycosyltransferase</keyword>
<keyword id="KW-0460">Magnesium</keyword>
<keyword id="KW-0479">Metal-binding</keyword>
<keyword id="KW-0808">Transferase</keyword>
<keyword id="KW-0822">Tryptophan biosynthesis</keyword>
<feature type="chain" id="PRO_1000099817" description="Anthranilate phosphoribosyltransferase">
    <location>
        <begin position="1"/>
        <end position="321"/>
    </location>
</feature>
<feature type="binding site" evidence="1">
    <location>
        <position position="72"/>
    </location>
    <ligand>
        <name>5-phospho-alpha-D-ribose 1-diphosphate</name>
        <dbReference type="ChEBI" id="CHEBI:58017"/>
    </ligand>
</feature>
<feature type="binding site" evidence="1">
    <location>
        <position position="72"/>
    </location>
    <ligand>
        <name>anthranilate</name>
        <dbReference type="ChEBI" id="CHEBI:16567"/>
        <label>1</label>
    </ligand>
</feature>
<feature type="binding site" evidence="1">
    <location>
        <begin position="75"/>
        <end position="76"/>
    </location>
    <ligand>
        <name>5-phospho-alpha-D-ribose 1-diphosphate</name>
        <dbReference type="ChEBI" id="CHEBI:58017"/>
    </ligand>
</feature>
<feature type="binding site" evidence="1">
    <location>
        <position position="80"/>
    </location>
    <ligand>
        <name>5-phospho-alpha-D-ribose 1-diphosphate</name>
        <dbReference type="ChEBI" id="CHEBI:58017"/>
    </ligand>
</feature>
<feature type="binding site" evidence="1">
    <location>
        <begin position="82"/>
        <end position="85"/>
    </location>
    <ligand>
        <name>5-phospho-alpha-D-ribose 1-diphosphate</name>
        <dbReference type="ChEBI" id="CHEBI:58017"/>
    </ligand>
</feature>
<feature type="binding site" evidence="1">
    <location>
        <position position="84"/>
    </location>
    <ligand>
        <name>Mg(2+)</name>
        <dbReference type="ChEBI" id="CHEBI:18420"/>
        <label>1</label>
    </ligand>
</feature>
<feature type="binding site" evidence="1">
    <location>
        <begin position="99"/>
        <end position="107"/>
    </location>
    <ligand>
        <name>5-phospho-alpha-D-ribose 1-diphosphate</name>
        <dbReference type="ChEBI" id="CHEBI:58017"/>
    </ligand>
</feature>
<feature type="binding site" evidence="1">
    <location>
        <position position="102"/>
    </location>
    <ligand>
        <name>anthranilate</name>
        <dbReference type="ChEBI" id="CHEBI:16567"/>
        <label>1</label>
    </ligand>
</feature>
<feature type="binding site" evidence="1">
    <location>
        <position position="111"/>
    </location>
    <ligand>
        <name>5-phospho-alpha-D-ribose 1-diphosphate</name>
        <dbReference type="ChEBI" id="CHEBI:58017"/>
    </ligand>
</feature>
<feature type="binding site" evidence="1">
    <location>
        <position position="157"/>
    </location>
    <ligand>
        <name>anthranilate</name>
        <dbReference type="ChEBI" id="CHEBI:16567"/>
        <label>2</label>
    </ligand>
</feature>
<feature type="binding site" evidence="1">
    <location>
        <position position="216"/>
    </location>
    <ligand>
        <name>Mg(2+)</name>
        <dbReference type="ChEBI" id="CHEBI:18420"/>
        <label>2</label>
    </ligand>
</feature>
<feature type="binding site" evidence="1">
    <location>
        <position position="217"/>
    </location>
    <ligand>
        <name>Mg(2+)</name>
        <dbReference type="ChEBI" id="CHEBI:18420"/>
        <label>1</label>
    </ligand>
</feature>
<feature type="binding site" evidence="1">
    <location>
        <position position="217"/>
    </location>
    <ligand>
        <name>Mg(2+)</name>
        <dbReference type="ChEBI" id="CHEBI:18420"/>
        <label>2</label>
    </ligand>
</feature>
<gene>
    <name evidence="1" type="primary">trpD</name>
    <name type="ordered locus">MmarC6_1652</name>
</gene>
<protein>
    <recommendedName>
        <fullName evidence="1">Anthranilate phosphoribosyltransferase</fullName>
        <ecNumber evidence="1">2.4.2.18</ecNumber>
    </recommendedName>
</protein>
<dbReference type="EC" id="2.4.2.18" evidence="1"/>
<dbReference type="EMBL" id="CP000867">
    <property type="protein sequence ID" value="ABX02464.1"/>
    <property type="molecule type" value="Genomic_DNA"/>
</dbReference>
<dbReference type="SMR" id="A9AAU1"/>
<dbReference type="STRING" id="444158.MmarC6_1652"/>
<dbReference type="KEGG" id="mmx:MmarC6_1652"/>
<dbReference type="eggNOG" id="arCOG02012">
    <property type="taxonomic scope" value="Archaea"/>
</dbReference>
<dbReference type="HOGENOM" id="CLU_034315_3_1_2"/>
<dbReference type="OrthoDB" id="8214at2157"/>
<dbReference type="PhylomeDB" id="A9AAU1"/>
<dbReference type="UniPathway" id="UPA00035">
    <property type="reaction ID" value="UER00041"/>
</dbReference>
<dbReference type="GO" id="GO:0005829">
    <property type="term" value="C:cytosol"/>
    <property type="evidence" value="ECO:0007669"/>
    <property type="project" value="TreeGrafter"/>
</dbReference>
<dbReference type="GO" id="GO:0004048">
    <property type="term" value="F:anthranilate phosphoribosyltransferase activity"/>
    <property type="evidence" value="ECO:0007669"/>
    <property type="project" value="UniProtKB-UniRule"/>
</dbReference>
<dbReference type="GO" id="GO:0000287">
    <property type="term" value="F:magnesium ion binding"/>
    <property type="evidence" value="ECO:0007669"/>
    <property type="project" value="UniProtKB-UniRule"/>
</dbReference>
<dbReference type="GO" id="GO:0000162">
    <property type="term" value="P:L-tryptophan biosynthetic process"/>
    <property type="evidence" value="ECO:0007669"/>
    <property type="project" value="UniProtKB-UniRule"/>
</dbReference>
<dbReference type="FunFam" id="3.40.1030.10:FF:000010">
    <property type="entry name" value="Anthranilate phosphoribosyltransferase"/>
    <property type="match status" value="1"/>
</dbReference>
<dbReference type="Gene3D" id="3.40.1030.10">
    <property type="entry name" value="Nucleoside phosphorylase/phosphoribosyltransferase catalytic domain"/>
    <property type="match status" value="1"/>
</dbReference>
<dbReference type="Gene3D" id="1.20.970.10">
    <property type="entry name" value="Transferase, Pyrimidine Nucleoside Phosphorylase, Chain C"/>
    <property type="match status" value="1"/>
</dbReference>
<dbReference type="HAMAP" id="MF_00211">
    <property type="entry name" value="TrpD"/>
    <property type="match status" value="1"/>
</dbReference>
<dbReference type="InterPro" id="IPR005940">
    <property type="entry name" value="Anthranilate_Pribosyl_Tfrase"/>
</dbReference>
<dbReference type="InterPro" id="IPR000312">
    <property type="entry name" value="Glycosyl_Trfase_fam3"/>
</dbReference>
<dbReference type="InterPro" id="IPR017459">
    <property type="entry name" value="Glycosyl_Trfase_fam3_N_dom"/>
</dbReference>
<dbReference type="InterPro" id="IPR036320">
    <property type="entry name" value="Glycosyl_Trfase_fam3_N_dom_sf"/>
</dbReference>
<dbReference type="InterPro" id="IPR035902">
    <property type="entry name" value="Nuc_phospho_transferase"/>
</dbReference>
<dbReference type="NCBIfam" id="TIGR01245">
    <property type="entry name" value="trpD"/>
    <property type="match status" value="1"/>
</dbReference>
<dbReference type="PANTHER" id="PTHR43285">
    <property type="entry name" value="ANTHRANILATE PHOSPHORIBOSYLTRANSFERASE"/>
    <property type="match status" value="1"/>
</dbReference>
<dbReference type="PANTHER" id="PTHR43285:SF2">
    <property type="entry name" value="ANTHRANILATE PHOSPHORIBOSYLTRANSFERASE"/>
    <property type="match status" value="1"/>
</dbReference>
<dbReference type="Pfam" id="PF02885">
    <property type="entry name" value="Glycos_trans_3N"/>
    <property type="match status" value="1"/>
</dbReference>
<dbReference type="Pfam" id="PF00591">
    <property type="entry name" value="Glycos_transf_3"/>
    <property type="match status" value="1"/>
</dbReference>
<dbReference type="SUPFAM" id="SSF52418">
    <property type="entry name" value="Nucleoside phosphorylase/phosphoribosyltransferase catalytic domain"/>
    <property type="match status" value="1"/>
</dbReference>
<dbReference type="SUPFAM" id="SSF47648">
    <property type="entry name" value="Nucleoside phosphorylase/phosphoribosyltransferase N-terminal domain"/>
    <property type="match status" value="1"/>
</dbReference>
<proteinExistence type="inferred from homology"/>
<organism>
    <name type="scientific">Methanococcus maripaludis (strain C6 / ATCC BAA-1332)</name>
    <dbReference type="NCBI Taxonomy" id="444158"/>
    <lineage>
        <taxon>Archaea</taxon>
        <taxon>Methanobacteriati</taxon>
        <taxon>Methanobacteriota</taxon>
        <taxon>Methanomada group</taxon>
        <taxon>Methanococci</taxon>
        <taxon>Methanococcales</taxon>
        <taxon>Methanococcaceae</taxon>
        <taxon>Methanococcus</taxon>
    </lineage>
</organism>